<evidence type="ECO:0000255" key="1">
    <source>
        <dbReference type="HAMAP-Rule" id="MF_01819"/>
    </source>
</evidence>
<dbReference type="EMBL" id="BX950851">
    <property type="protein sequence ID" value="CAG74834.1"/>
    <property type="molecule type" value="Genomic_DNA"/>
</dbReference>
<dbReference type="RefSeq" id="WP_011093498.1">
    <property type="nucleotide sequence ID" value="NC_004547.2"/>
</dbReference>
<dbReference type="SMR" id="Q6D5V7"/>
<dbReference type="STRING" id="218491.ECA1931"/>
<dbReference type="GeneID" id="57209364"/>
<dbReference type="KEGG" id="eca:ECA1931"/>
<dbReference type="PATRIC" id="fig|218491.5.peg.1964"/>
<dbReference type="eggNOG" id="COG1846">
    <property type="taxonomic scope" value="Bacteria"/>
</dbReference>
<dbReference type="HOGENOM" id="CLU_083287_18_2_6"/>
<dbReference type="OrthoDB" id="5296557at2"/>
<dbReference type="Proteomes" id="UP000007966">
    <property type="component" value="Chromosome"/>
</dbReference>
<dbReference type="GO" id="GO:0003677">
    <property type="term" value="F:DNA binding"/>
    <property type="evidence" value="ECO:0007669"/>
    <property type="project" value="UniProtKB-UniRule"/>
</dbReference>
<dbReference type="GO" id="GO:0003700">
    <property type="term" value="F:DNA-binding transcription factor activity"/>
    <property type="evidence" value="ECO:0007669"/>
    <property type="project" value="UniProtKB-UniRule"/>
</dbReference>
<dbReference type="GO" id="GO:0006950">
    <property type="term" value="P:response to stress"/>
    <property type="evidence" value="ECO:0007669"/>
    <property type="project" value="TreeGrafter"/>
</dbReference>
<dbReference type="Gene3D" id="1.10.10.10">
    <property type="entry name" value="Winged helix-like DNA-binding domain superfamily/Winged helix DNA-binding domain"/>
    <property type="match status" value="1"/>
</dbReference>
<dbReference type="HAMAP" id="MF_01819">
    <property type="entry name" value="HTH_type_SlyA"/>
    <property type="match status" value="1"/>
</dbReference>
<dbReference type="InterPro" id="IPR000835">
    <property type="entry name" value="HTH_MarR-typ"/>
</dbReference>
<dbReference type="InterPro" id="IPR039422">
    <property type="entry name" value="MarR/SlyA-like"/>
</dbReference>
<dbReference type="InterPro" id="IPR023187">
    <property type="entry name" value="Tscrpt_reg_MarR-type_CS"/>
</dbReference>
<dbReference type="InterPro" id="IPR023071">
    <property type="entry name" value="Tscrpt_reg_SlyA"/>
</dbReference>
<dbReference type="InterPro" id="IPR036388">
    <property type="entry name" value="WH-like_DNA-bd_sf"/>
</dbReference>
<dbReference type="InterPro" id="IPR036390">
    <property type="entry name" value="WH_DNA-bd_sf"/>
</dbReference>
<dbReference type="NCBIfam" id="NF002926">
    <property type="entry name" value="PRK03573.1"/>
    <property type="match status" value="1"/>
</dbReference>
<dbReference type="PANTHER" id="PTHR33164:SF64">
    <property type="entry name" value="TRANSCRIPTIONAL REGULATOR SLYA"/>
    <property type="match status" value="1"/>
</dbReference>
<dbReference type="PANTHER" id="PTHR33164">
    <property type="entry name" value="TRANSCRIPTIONAL REGULATOR, MARR FAMILY"/>
    <property type="match status" value="1"/>
</dbReference>
<dbReference type="Pfam" id="PF01047">
    <property type="entry name" value="MarR"/>
    <property type="match status" value="1"/>
</dbReference>
<dbReference type="PRINTS" id="PR00598">
    <property type="entry name" value="HTHMARR"/>
</dbReference>
<dbReference type="SMART" id="SM00347">
    <property type="entry name" value="HTH_MARR"/>
    <property type="match status" value="1"/>
</dbReference>
<dbReference type="SUPFAM" id="SSF46785">
    <property type="entry name" value="Winged helix' DNA-binding domain"/>
    <property type="match status" value="1"/>
</dbReference>
<dbReference type="PROSITE" id="PS01117">
    <property type="entry name" value="HTH_MARR_1"/>
    <property type="match status" value="1"/>
</dbReference>
<dbReference type="PROSITE" id="PS50995">
    <property type="entry name" value="HTH_MARR_2"/>
    <property type="match status" value="1"/>
</dbReference>
<protein>
    <recommendedName>
        <fullName evidence="1">Transcriptional regulator SlyA</fullName>
    </recommendedName>
</protein>
<organism>
    <name type="scientific">Pectobacterium atrosepticum (strain SCRI 1043 / ATCC BAA-672)</name>
    <name type="common">Erwinia carotovora subsp. atroseptica</name>
    <dbReference type="NCBI Taxonomy" id="218491"/>
    <lineage>
        <taxon>Bacteria</taxon>
        <taxon>Pseudomonadati</taxon>
        <taxon>Pseudomonadota</taxon>
        <taxon>Gammaproteobacteria</taxon>
        <taxon>Enterobacterales</taxon>
        <taxon>Pectobacteriaceae</taxon>
        <taxon>Pectobacterium</taxon>
    </lineage>
</organism>
<name>SLYA_PECAS</name>
<sequence>MELPLGSDLARLVRVWRALVDHRLKPLELTQTHWVTLHNIYHLPPGQSQIQLAKAIGIEQPSLVRTLDQLEEKGLITRHVCAHDRRAKRIMLTESAEPIIQAVDGVISHTRSEVLFGITPEQVDELALLVARLEKNILALHENQA</sequence>
<feature type="chain" id="PRO_0000054389" description="Transcriptional regulator SlyA">
    <location>
        <begin position="1"/>
        <end position="145"/>
    </location>
</feature>
<feature type="domain" description="HTH marR-type" evidence="1">
    <location>
        <begin position="2"/>
        <end position="135"/>
    </location>
</feature>
<feature type="DNA-binding region" description="H-T-H motif" evidence="1">
    <location>
        <begin position="49"/>
        <end position="72"/>
    </location>
</feature>
<proteinExistence type="inferred from homology"/>
<comment type="function">
    <text evidence="1">Transcription regulator that can specifically activate or repress expression of target genes.</text>
</comment>
<comment type="subunit">
    <text evidence="1">Homodimer.</text>
</comment>
<comment type="similarity">
    <text evidence="1">Belongs to the SlyA family.</text>
</comment>
<accession>Q6D5V7</accession>
<reference key="1">
    <citation type="journal article" date="2004" name="Proc. Natl. Acad. Sci. U.S.A.">
        <title>Genome sequence of the enterobacterial phytopathogen Erwinia carotovora subsp. atroseptica and characterization of virulence factors.</title>
        <authorList>
            <person name="Bell K.S."/>
            <person name="Sebaihia M."/>
            <person name="Pritchard L."/>
            <person name="Holden M.T.G."/>
            <person name="Hyman L.J."/>
            <person name="Holeva M.C."/>
            <person name="Thomson N.R."/>
            <person name="Bentley S.D."/>
            <person name="Churcher L.J.C."/>
            <person name="Mungall K."/>
            <person name="Atkin R."/>
            <person name="Bason N."/>
            <person name="Brooks K."/>
            <person name="Chillingworth T."/>
            <person name="Clark K."/>
            <person name="Doggett J."/>
            <person name="Fraser A."/>
            <person name="Hance Z."/>
            <person name="Hauser H."/>
            <person name="Jagels K."/>
            <person name="Moule S."/>
            <person name="Norbertczak H."/>
            <person name="Ormond D."/>
            <person name="Price C."/>
            <person name="Quail M.A."/>
            <person name="Sanders M."/>
            <person name="Walker D."/>
            <person name="Whitehead S."/>
            <person name="Salmond G.P.C."/>
            <person name="Birch P.R.J."/>
            <person name="Parkhill J."/>
            <person name="Toth I.K."/>
        </authorList>
    </citation>
    <scope>NUCLEOTIDE SEQUENCE [LARGE SCALE GENOMIC DNA]</scope>
    <source>
        <strain>SCRI 1043 / ATCC BAA-672</strain>
    </source>
</reference>
<gene>
    <name evidence="1" type="primary">slyA</name>
    <name type="ordered locus">ECA1931</name>
</gene>
<keyword id="KW-0010">Activator</keyword>
<keyword id="KW-0238">DNA-binding</keyword>
<keyword id="KW-1185">Reference proteome</keyword>
<keyword id="KW-0678">Repressor</keyword>
<keyword id="KW-0804">Transcription</keyword>
<keyword id="KW-0805">Transcription regulation</keyword>